<protein>
    <recommendedName>
        <fullName>Hairy/enhancer-of-split related with YRPW motif protein 2</fullName>
    </recommendedName>
    <alternativeName>
        <fullName>Cardiovascular helix-loop-helix factor 1</fullName>
        <shortName>hCHF1</shortName>
    </alternativeName>
    <alternativeName>
        <fullName>Class B basic helix-loop-helix protein 32</fullName>
        <shortName>bHLHb32</shortName>
    </alternativeName>
    <alternativeName>
        <fullName>HES-related repressor protein 2</fullName>
    </alternativeName>
    <alternativeName>
        <fullName>Hairy and enhancer of split-related protein 2</fullName>
        <shortName>HESR-2</shortName>
    </alternativeName>
    <alternativeName>
        <fullName>Hairy-related transcription factor 2</fullName>
        <shortName>HRT-2</shortName>
        <shortName>hHRT2</shortName>
    </alternativeName>
    <alternativeName>
        <fullName>Protein gridlock homolog</fullName>
    </alternativeName>
</protein>
<name>HEY2_HUMAN</name>
<dbReference type="EMBL" id="AJ249545">
    <property type="protein sequence ID" value="CAB56839.1"/>
    <property type="molecule type" value="mRNA"/>
</dbReference>
<dbReference type="EMBL" id="AF237949">
    <property type="protein sequence ID" value="AAF44781.1"/>
    <property type="molecule type" value="mRNA"/>
</dbReference>
<dbReference type="EMBL" id="AF173901">
    <property type="protein sequence ID" value="AAF20173.1"/>
    <property type="molecule type" value="mRNA"/>
</dbReference>
<dbReference type="EMBL" id="AF311884">
    <property type="protein sequence ID" value="AAG31157.1"/>
    <property type="molecule type" value="mRNA"/>
</dbReference>
<dbReference type="EMBL" id="AF232238">
    <property type="protein sequence ID" value="AAF37296.1"/>
    <property type="molecule type" value="mRNA"/>
</dbReference>
<dbReference type="EMBL" id="AB044755">
    <property type="protein sequence ID" value="BAA96781.1"/>
    <property type="molecule type" value="mRNA"/>
</dbReference>
<dbReference type="EMBL" id="BT020067">
    <property type="protein sequence ID" value="AAV38870.1"/>
    <property type="molecule type" value="mRNA"/>
</dbReference>
<dbReference type="EMBL" id="BT020068">
    <property type="protein sequence ID" value="AAV38871.1"/>
    <property type="molecule type" value="mRNA"/>
</dbReference>
<dbReference type="EMBL" id="AL078594">
    <property type="status" value="NOT_ANNOTATED_CDS"/>
    <property type="molecule type" value="Genomic_DNA"/>
</dbReference>
<dbReference type="EMBL" id="BC007707">
    <property type="protein sequence ID" value="AAH07707.1"/>
    <property type="molecule type" value="mRNA"/>
</dbReference>
<dbReference type="CCDS" id="CCDS5131.1"/>
<dbReference type="RefSeq" id="NP_036391.1">
    <property type="nucleotide sequence ID" value="NM_012259.3"/>
</dbReference>
<dbReference type="SMR" id="Q9UBP5"/>
<dbReference type="BioGRID" id="117045">
    <property type="interactions" value="54"/>
</dbReference>
<dbReference type="CORUM" id="Q9UBP5"/>
<dbReference type="ELM" id="Q9UBP5"/>
<dbReference type="FunCoup" id="Q9UBP5">
    <property type="interactions" value="1421"/>
</dbReference>
<dbReference type="IntAct" id="Q9UBP5">
    <property type="interactions" value="35"/>
</dbReference>
<dbReference type="STRING" id="9606.ENSP00000357348"/>
<dbReference type="TCDB" id="3.A.16.1.4">
    <property type="family name" value="the endoplasmic reticular retrotranslocon (er-rt) family"/>
</dbReference>
<dbReference type="iPTMnet" id="Q9UBP5"/>
<dbReference type="PhosphoSitePlus" id="Q9UBP5"/>
<dbReference type="BioMuta" id="HEY2"/>
<dbReference type="DMDM" id="74762767"/>
<dbReference type="jPOST" id="Q9UBP5"/>
<dbReference type="MassIVE" id="Q9UBP5"/>
<dbReference type="PaxDb" id="9606-ENSP00000357348"/>
<dbReference type="PeptideAtlas" id="Q9UBP5"/>
<dbReference type="ProteomicsDB" id="84025"/>
<dbReference type="Antibodypedia" id="32702">
    <property type="antibodies" value="227 antibodies from 33 providers"/>
</dbReference>
<dbReference type="DNASU" id="23493"/>
<dbReference type="Ensembl" id="ENST00000368364.4">
    <property type="protein sequence ID" value="ENSP00000357348.3"/>
    <property type="gene ID" value="ENSG00000135547.9"/>
</dbReference>
<dbReference type="GeneID" id="23493"/>
<dbReference type="KEGG" id="hsa:23493"/>
<dbReference type="MANE-Select" id="ENST00000368364.4">
    <property type="protein sequence ID" value="ENSP00000357348.3"/>
    <property type="RefSeq nucleotide sequence ID" value="NM_012259.3"/>
    <property type="RefSeq protein sequence ID" value="NP_036391.1"/>
</dbReference>
<dbReference type="UCSC" id="uc003qad.4">
    <property type="organism name" value="human"/>
</dbReference>
<dbReference type="AGR" id="HGNC:4881"/>
<dbReference type="CTD" id="23493"/>
<dbReference type="DisGeNET" id="23493"/>
<dbReference type="GeneCards" id="HEY2"/>
<dbReference type="HGNC" id="HGNC:4881">
    <property type="gene designation" value="HEY2"/>
</dbReference>
<dbReference type="HPA" id="ENSG00000135547">
    <property type="expression patterns" value="Tissue enhanced (heart)"/>
</dbReference>
<dbReference type="MalaCards" id="HEY2"/>
<dbReference type="MIM" id="604674">
    <property type="type" value="gene"/>
</dbReference>
<dbReference type="neXtProt" id="NX_Q9UBP5"/>
<dbReference type="OpenTargets" id="ENSG00000135547"/>
<dbReference type="Orphanet" id="91387">
    <property type="disease" value="Familial thoracic aortic aneurysm and aortic dissection"/>
</dbReference>
<dbReference type="PharmGKB" id="PA29259"/>
<dbReference type="VEuPathDB" id="HostDB:ENSG00000135547"/>
<dbReference type="eggNOG" id="KOG4304">
    <property type="taxonomic scope" value="Eukaryota"/>
</dbReference>
<dbReference type="GeneTree" id="ENSGT00940000160636"/>
<dbReference type="InParanoid" id="Q9UBP5"/>
<dbReference type="OMA" id="DTTPCRL"/>
<dbReference type="OrthoDB" id="6371181at2759"/>
<dbReference type="PAN-GO" id="Q9UBP5">
    <property type="GO annotations" value="8 GO annotations based on evolutionary models"/>
</dbReference>
<dbReference type="PhylomeDB" id="Q9UBP5"/>
<dbReference type="TreeFam" id="TF323617"/>
<dbReference type="PathwayCommons" id="Q9UBP5"/>
<dbReference type="Reactome" id="R-HSA-2122947">
    <property type="pathway name" value="NOTCH1 Intracellular Domain Regulates Transcription"/>
</dbReference>
<dbReference type="Reactome" id="R-HSA-2644606">
    <property type="pathway name" value="Constitutive Signaling by NOTCH1 PEST Domain Mutants"/>
</dbReference>
<dbReference type="Reactome" id="R-HSA-2894862">
    <property type="pathway name" value="Constitutive Signaling by NOTCH1 HD+PEST Domain Mutants"/>
</dbReference>
<dbReference type="Reactome" id="R-HSA-8940973">
    <property type="pathway name" value="RUNX2 regulates osteoblast differentiation"/>
</dbReference>
<dbReference type="Reactome" id="R-HSA-9013508">
    <property type="pathway name" value="NOTCH3 Intracellular Domain Regulates Transcription"/>
</dbReference>
<dbReference type="Reactome" id="R-HSA-9013695">
    <property type="pathway name" value="NOTCH4 Intracellular Domain Regulates Transcription"/>
</dbReference>
<dbReference type="Reactome" id="R-HSA-9733709">
    <property type="pathway name" value="Cardiogenesis"/>
</dbReference>
<dbReference type="SignaLink" id="Q9UBP5"/>
<dbReference type="SIGNOR" id="Q9UBP5"/>
<dbReference type="BioGRID-ORCS" id="23493">
    <property type="hits" value="15 hits in 1172 CRISPR screens"/>
</dbReference>
<dbReference type="GeneWiki" id="HEY2"/>
<dbReference type="GenomeRNAi" id="23493"/>
<dbReference type="Pharos" id="Q9UBP5">
    <property type="development level" value="Tbio"/>
</dbReference>
<dbReference type="PRO" id="PR:Q9UBP5"/>
<dbReference type="Proteomes" id="UP000005640">
    <property type="component" value="Chromosome 6"/>
</dbReference>
<dbReference type="RNAct" id="Q9UBP5">
    <property type="molecule type" value="protein"/>
</dbReference>
<dbReference type="Bgee" id="ENSG00000135547">
    <property type="expression patterns" value="Expressed in popliteal artery and 168 other cell types or tissues"/>
</dbReference>
<dbReference type="ExpressionAtlas" id="Q9UBP5">
    <property type="expression patterns" value="baseline and differential"/>
</dbReference>
<dbReference type="GO" id="GO:0000785">
    <property type="term" value="C:chromatin"/>
    <property type="evidence" value="ECO:0000247"/>
    <property type="project" value="NTNU_SB"/>
</dbReference>
<dbReference type="GO" id="GO:0005737">
    <property type="term" value="C:cytoplasm"/>
    <property type="evidence" value="ECO:0000250"/>
    <property type="project" value="UniProtKB"/>
</dbReference>
<dbReference type="GO" id="GO:0005654">
    <property type="term" value="C:nucleoplasm"/>
    <property type="evidence" value="ECO:0000304"/>
    <property type="project" value="Reactome"/>
</dbReference>
<dbReference type="GO" id="GO:0005634">
    <property type="term" value="C:nucleus"/>
    <property type="evidence" value="ECO:0000250"/>
    <property type="project" value="UniProtKB"/>
</dbReference>
<dbReference type="GO" id="GO:0017053">
    <property type="term" value="C:transcription repressor complex"/>
    <property type="evidence" value="ECO:0000314"/>
    <property type="project" value="BHF-UCL"/>
</dbReference>
<dbReference type="GO" id="GO:0000987">
    <property type="term" value="F:cis-regulatory region sequence-specific DNA binding"/>
    <property type="evidence" value="ECO:0000250"/>
    <property type="project" value="BHF-UCL"/>
</dbReference>
<dbReference type="GO" id="GO:0003700">
    <property type="term" value="F:DNA-binding transcription factor activity"/>
    <property type="evidence" value="ECO:0000314"/>
    <property type="project" value="UniProtKB"/>
</dbReference>
<dbReference type="GO" id="GO:0000981">
    <property type="term" value="F:DNA-binding transcription factor activity, RNA polymerase II-specific"/>
    <property type="evidence" value="ECO:0000314"/>
    <property type="project" value="UniProtKB"/>
</dbReference>
<dbReference type="GO" id="GO:0001227">
    <property type="term" value="F:DNA-binding transcription repressor activity, RNA polymerase II-specific"/>
    <property type="evidence" value="ECO:0000250"/>
    <property type="project" value="UniProtKB"/>
</dbReference>
<dbReference type="GO" id="GO:0042826">
    <property type="term" value="F:histone deacetylase binding"/>
    <property type="evidence" value="ECO:0000353"/>
    <property type="project" value="BHF-UCL"/>
</dbReference>
<dbReference type="GO" id="GO:0042802">
    <property type="term" value="F:identical protein binding"/>
    <property type="evidence" value="ECO:0007669"/>
    <property type="project" value="Ensembl"/>
</dbReference>
<dbReference type="GO" id="GO:0046983">
    <property type="term" value="F:protein dimerization activity"/>
    <property type="evidence" value="ECO:0007669"/>
    <property type="project" value="InterPro"/>
</dbReference>
<dbReference type="GO" id="GO:0000978">
    <property type="term" value="F:RNA polymerase II cis-regulatory region sequence-specific DNA binding"/>
    <property type="evidence" value="ECO:0000318"/>
    <property type="project" value="GO_Central"/>
</dbReference>
<dbReference type="GO" id="GO:0061629">
    <property type="term" value="F:RNA polymerase II-specific DNA-binding transcription factor binding"/>
    <property type="evidence" value="ECO:0000353"/>
    <property type="project" value="BHF-UCL"/>
</dbReference>
<dbReference type="GO" id="GO:0043565">
    <property type="term" value="F:sequence-specific DNA binding"/>
    <property type="evidence" value="ECO:0000314"/>
    <property type="project" value="BHF-UCL"/>
</dbReference>
<dbReference type="GO" id="GO:1990837">
    <property type="term" value="F:sequence-specific double-stranded DNA binding"/>
    <property type="evidence" value="ECO:0000314"/>
    <property type="project" value="ARUK-UCL"/>
</dbReference>
<dbReference type="GO" id="GO:0009948">
    <property type="term" value="P:anterior/posterior axis specification"/>
    <property type="evidence" value="ECO:0007669"/>
    <property type="project" value="Ensembl"/>
</dbReference>
<dbReference type="GO" id="GO:0003180">
    <property type="term" value="P:aortic valve morphogenesis"/>
    <property type="evidence" value="ECO:0000250"/>
    <property type="project" value="BHF-UCL"/>
</dbReference>
<dbReference type="GO" id="GO:0060842">
    <property type="term" value="P:arterial endothelial cell differentiation"/>
    <property type="evidence" value="ECO:0000250"/>
    <property type="project" value="BHF-UCL"/>
</dbReference>
<dbReference type="GO" id="GO:0035910">
    <property type="term" value="P:ascending aorta morphogenesis"/>
    <property type="evidence" value="ECO:0000250"/>
    <property type="project" value="BHF-UCL"/>
</dbReference>
<dbReference type="GO" id="GO:0060413">
    <property type="term" value="P:atrial septum morphogenesis"/>
    <property type="evidence" value="ECO:0000250"/>
    <property type="project" value="BHF-UCL"/>
</dbReference>
<dbReference type="GO" id="GO:0003161">
    <property type="term" value="P:cardiac conduction system development"/>
    <property type="evidence" value="ECO:0000303"/>
    <property type="project" value="BHF-UCL"/>
</dbReference>
<dbReference type="GO" id="GO:0060317">
    <property type="term" value="P:cardiac epithelial to mesenchymal transition"/>
    <property type="evidence" value="ECO:0000250"/>
    <property type="project" value="BHF-UCL"/>
</dbReference>
<dbReference type="GO" id="GO:0003214">
    <property type="term" value="P:cardiac left ventricle morphogenesis"/>
    <property type="evidence" value="ECO:0000250"/>
    <property type="project" value="BHF-UCL"/>
</dbReference>
<dbReference type="GO" id="GO:0010659">
    <property type="term" value="P:cardiac muscle cell apoptotic process"/>
    <property type="evidence" value="ECO:0007669"/>
    <property type="project" value="Ensembl"/>
</dbReference>
<dbReference type="GO" id="GO:0060038">
    <property type="term" value="P:cardiac muscle cell proliferation"/>
    <property type="evidence" value="ECO:0007669"/>
    <property type="project" value="Ensembl"/>
</dbReference>
<dbReference type="GO" id="GO:0014898">
    <property type="term" value="P:cardiac muscle hypertrophy in response to stress"/>
    <property type="evidence" value="ECO:0007669"/>
    <property type="project" value="Ensembl"/>
</dbReference>
<dbReference type="GO" id="GO:0003215">
    <property type="term" value="P:cardiac right ventricle morphogenesis"/>
    <property type="evidence" value="ECO:0000250"/>
    <property type="project" value="BHF-UCL"/>
</dbReference>
<dbReference type="GO" id="GO:0060411">
    <property type="term" value="P:cardiac septum morphogenesis"/>
    <property type="evidence" value="ECO:0000250"/>
    <property type="project" value="BHF-UCL"/>
</dbReference>
<dbReference type="GO" id="GO:0060948">
    <property type="term" value="P:cardiac vascular smooth muscle cell development"/>
    <property type="evidence" value="ECO:0007669"/>
    <property type="project" value="Ensembl"/>
</dbReference>
<dbReference type="GO" id="GO:0003208">
    <property type="term" value="P:cardiac ventricle morphogenesis"/>
    <property type="evidence" value="ECO:0000250"/>
    <property type="project" value="UniProtKB"/>
</dbReference>
<dbReference type="GO" id="GO:0045165">
    <property type="term" value="P:cell fate commitment"/>
    <property type="evidence" value="ECO:0007669"/>
    <property type="project" value="Ensembl"/>
</dbReference>
<dbReference type="GO" id="GO:0072359">
    <property type="term" value="P:circulatory system development"/>
    <property type="evidence" value="ECO:0000318"/>
    <property type="project" value="GO_Central"/>
</dbReference>
<dbReference type="GO" id="GO:0090102">
    <property type="term" value="P:cochlea development"/>
    <property type="evidence" value="ECO:0007669"/>
    <property type="project" value="Ensembl"/>
</dbReference>
<dbReference type="GO" id="GO:0060977">
    <property type="term" value="P:coronary vasculature morphogenesis"/>
    <property type="evidence" value="ECO:0007669"/>
    <property type="project" value="Ensembl"/>
</dbReference>
<dbReference type="GO" id="GO:0035912">
    <property type="term" value="P:dorsal aorta morphogenesis"/>
    <property type="evidence" value="ECO:0000250"/>
    <property type="project" value="BHF-UCL"/>
</dbReference>
<dbReference type="GO" id="GO:0003199">
    <property type="term" value="P:endocardial cushion to mesenchymal transition involved in heart valve formation"/>
    <property type="evidence" value="ECO:0007669"/>
    <property type="project" value="Ensembl"/>
</dbReference>
<dbReference type="GO" id="GO:0003198">
    <property type="term" value="P:epithelial to mesenchymal transition involved in endocardial cushion formation"/>
    <property type="evidence" value="ECO:0000304"/>
    <property type="project" value="BHF-UCL"/>
</dbReference>
<dbReference type="GO" id="GO:0060347">
    <property type="term" value="P:heart trabecula formation"/>
    <property type="evidence" value="ECO:0007669"/>
    <property type="project" value="Ensembl"/>
</dbReference>
<dbReference type="GO" id="GO:0060716">
    <property type="term" value="P:labyrinthine layer blood vessel development"/>
    <property type="evidence" value="ECO:0000250"/>
    <property type="project" value="BHF-UCL"/>
</dbReference>
<dbReference type="GO" id="GO:0014031">
    <property type="term" value="P:mesenchymal cell development"/>
    <property type="evidence" value="ECO:0000250"/>
    <property type="project" value="BHF-UCL"/>
</dbReference>
<dbReference type="GO" id="GO:0003150">
    <property type="term" value="P:muscular septum morphogenesis"/>
    <property type="evidence" value="ECO:0000250"/>
    <property type="project" value="BHF-UCL"/>
</dbReference>
<dbReference type="GO" id="GO:0070168">
    <property type="term" value="P:negative regulation of biomineral tissue development"/>
    <property type="evidence" value="ECO:0000250"/>
    <property type="project" value="BHF-UCL"/>
</dbReference>
<dbReference type="GO" id="GO:0010667">
    <property type="term" value="P:negative regulation of cardiac muscle cell apoptotic process"/>
    <property type="evidence" value="ECO:0007669"/>
    <property type="project" value="Ensembl"/>
</dbReference>
<dbReference type="GO" id="GO:2000723">
    <property type="term" value="P:negative regulation of cardiac vascular smooth muscle cell differentiation"/>
    <property type="evidence" value="ECO:0000250"/>
    <property type="project" value="BHF-UCL"/>
</dbReference>
<dbReference type="GO" id="GO:0045892">
    <property type="term" value="P:negative regulation of DNA-templated transcription"/>
    <property type="evidence" value="ECO:0000314"/>
    <property type="project" value="UniProtKB"/>
</dbReference>
<dbReference type="GO" id="GO:0010629">
    <property type="term" value="P:negative regulation of gene expression"/>
    <property type="evidence" value="ECO:0000250"/>
    <property type="project" value="UniProtKB"/>
</dbReference>
<dbReference type="GO" id="GO:0045746">
    <property type="term" value="P:negative regulation of Notch signaling pathway"/>
    <property type="evidence" value="ECO:0000250"/>
    <property type="project" value="BHF-UCL"/>
</dbReference>
<dbReference type="GO" id="GO:0051151">
    <property type="term" value="P:negative regulation of smooth muscle cell differentiation"/>
    <property type="evidence" value="ECO:0000250"/>
    <property type="project" value="BHF-UCL"/>
</dbReference>
<dbReference type="GO" id="GO:0000122">
    <property type="term" value="P:negative regulation of transcription by RNA polymerase II"/>
    <property type="evidence" value="ECO:0000314"/>
    <property type="project" value="UniProtKB"/>
</dbReference>
<dbReference type="GO" id="GO:0060633">
    <property type="term" value="P:negative regulation of transcription initiation by RNA polymerase II"/>
    <property type="evidence" value="ECO:0000314"/>
    <property type="project" value="BHF-UCL"/>
</dbReference>
<dbReference type="GO" id="GO:2000678">
    <property type="term" value="P:negative regulation of transcription regulatory region DNA binding"/>
    <property type="evidence" value="ECO:0000314"/>
    <property type="project" value="BHF-UCL"/>
</dbReference>
<dbReference type="GO" id="GO:0007219">
    <property type="term" value="P:Notch signaling pathway"/>
    <property type="evidence" value="ECO:0000250"/>
    <property type="project" value="UniProtKB"/>
</dbReference>
<dbReference type="GO" id="GO:0003151">
    <property type="term" value="P:outflow tract morphogenesis"/>
    <property type="evidence" value="ECO:0000250"/>
    <property type="project" value="BHF-UCL"/>
</dbReference>
<dbReference type="GO" id="GO:0060045">
    <property type="term" value="P:positive regulation of cardiac muscle cell proliferation"/>
    <property type="evidence" value="ECO:0007669"/>
    <property type="project" value="Ensembl"/>
</dbReference>
<dbReference type="GO" id="GO:0010460">
    <property type="term" value="P:positive regulation of heart rate"/>
    <property type="evidence" value="ECO:0007669"/>
    <property type="project" value="Ensembl"/>
</dbReference>
<dbReference type="GO" id="GO:0045944">
    <property type="term" value="P:positive regulation of transcription by RNA polymerase II"/>
    <property type="evidence" value="ECO:0000250"/>
    <property type="project" value="BHF-UCL"/>
</dbReference>
<dbReference type="GO" id="GO:0065004">
    <property type="term" value="P:protein-DNA complex assembly"/>
    <property type="evidence" value="ECO:0007669"/>
    <property type="project" value="Ensembl"/>
</dbReference>
<dbReference type="GO" id="GO:0061156">
    <property type="term" value="P:pulmonary artery morphogenesis"/>
    <property type="evidence" value="ECO:0000250"/>
    <property type="project" value="BHF-UCL"/>
</dbReference>
<dbReference type="GO" id="GO:0003184">
    <property type="term" value="P:pulmonary valve morphogenesis"/>
    <property type="evidence" value="ECO:0000250"/>
    <property type="project" value="BHF-UCL"/>
</dbReference>
<dbReference type="GO" id="GO:0045607">
    <property type="term" value="P:regulation of inner ear auditory receptor cell differentiation"/>
    <property type="evidence" value="ECO:0007669"/>
    <property type="project" value="Ensembl"/>
</dbReference>
<dbReference type="GO" id="GO:0050767">
    <property type="term" value="P:regulation of neurogenesis"/>
    <property type="evidence" value="ECO:0000318"/>
    <property type="project" value="GO_Central"/>
</dbReference>
<dbReference type="GO" id="GO:2001212">
    <property type="term" value="P:regulation of vasculogenesis"/>
    <property type="evidence" value="ECO:0000250"/>
    <property type="project" value="BHF-UCL"/>
</dbReference>
<dbReference type="GO" id="GO:0051145">
    <property type="term" value="P:smooth muscle cell differentiation"/>
    <property type="evidence" value="ECO:0000303"/>
    <property type="project" value="BHF-UCL"/>
</dbReference>
<dbReference type="GO" id="GO:0003195">
    <property type="term" value="P:tricuspid valve formation"/>
    <property type="evidence" value="ECO:0007669"/>
    <property type="project" value="Ensembl"/>
</dbReference>
<dbReference type="GO" id="GO:0003186">
    <property type="term" value="P:tricuspid valve morphogenesis"/>
    <property type="evidence" value="ECO:0000250"/>
    <property type="project" value="BHF-UCL"/>
</dbReference>
<dbReference type="GO" id="GO:0036304">
    <property type="term" value="P:umbilical cord morphogenesis"/>
    <property type="evidence" value="ECO:0000250"/>
    <property type="project" value="BHF-UCL"/>
</dbReference>
<dbReference type="GO" id="GO:0097084">
    <property type="term" value="P:vascular associated smooth muscle cell development"/>
    <property type="evidence" value="ECO:0000270"/>
    <property type="project" value="UniProtKB"/>
</dbReference>
<dbReference type="GO" id="GO:0001570">
    <property type="term" value="P:vasculogenesis"/>
    <property type="evidence" value="ECO:0000250"/>
    <property type="project" value="BHF-UCL"/>
</dbReference>
<dbReference type="GO" id="GO:0055015">
    <property type="term" value="P:ventricular cardiac muscle cell development"/>
    <property type="evidence" value="ECO:0000250"/>
    <property type="project" value="UniProtKB"/>
</dbReference>
<dbReference type="GO" id="GO:0060412">
    <property type="term" value="P:ventricular septum morphogenesis"/>
    <property type="evidence" value="ECO:0000250"/>
    <property type="project" value="BHF-UCL"/>
</dbReference>
<dbReference type="GO" id="GO:0003222">
    <property type="term" value="P:ventricular trabecula myocardium morphogenesis"/>
    <property type="evidence" value="ECO:0007669"/>
    <property type="project" value="Ensembl"/>
</dbReference>
<dbReference type="CDD" id="cd18920">
    <property type="entry name" value="bHLH-O_HEY2"/>
    <property type="match status" value="1"/>
</dbReference>
<dbReference type="FunFam" id="4.10.280.10:FF:000012">
    <property type="entry name" value="hairy/enhancer-of-split related with YRPW motif protein 1"/>
    <property type="match status" value="1"/>
</dbReference>
<dbReference type="Gene3D" id="6.10.250.980">
    <property type="match status" value="1"/>
</dbReference>
<dbReference type="Gene3D" id="4.10.280.10">
    <property type="entry name" value="Helix-loop-helix DNA-binding domain"/>
    <property type="match status" value="1"/>
</dbReference>
<dbReference type="InterPro" id="IPR011598">
    <property type="entry name" value="bHLH_dom"/>
</dbReference>
<dbReference type="InterPro" id="IPR050370">
    <property type="entry name" value="HES_HEY"/>
</dbReference>
<dbReference type="InterPro" id="IPR036638">
    <property type="entry name" value="HLH_DNA-bd_sf"/>
</dbReference>
<dbReference type="InterPro" id="IPR003650">
    <property type="entry name" value="Orange_dom"/>
</dbReference>
<dbReference type="PANTHER" id="PTHR10985">
    <property type="entry name" value="BASIC HELIX-LOOP-HELIX TRANSCRIPTION FACTOR, HES-RELATED"/>
    <property type="match status" value="1"/>
</dbReference>
<dbReference type="Pfam" id="PF07527">
    <property type="entry name" value="Hairy_orange"/>
    <property type="match status" value="1"/>
</dbReference>
<dbReference type="Pfam" id="PF00010">
    <property type="entry name" value="HLH"/>
    <property type="match status" value="1"/>
</dbReference>
<dbReference type="SMART" id="SM00353">
    <property type="entry name" value="HLH"/>
    <property type="match status" value="1"/>
</dbReference>
<dbReference type="SMART" id="SM00511">
    <property type="entry name" value="ORANGE"/>
    <property type="match status" value="1"/>
</dbReference>
<dbReference type="SUPFAM" id="SSF47459">
    <property type="entry name" value="HLH, helix-loop-helix DNA-binding domain"/>
    <property type="match status" value="1"/>
</dbReference>
<dbReference type="SUPFAM" id="SSF158457">
    <property type="entry name" value="Orange domain-like"/>
    <property type="match status" value="1"/>
</dbReference>
<dbReference type="PROSITE" id="PS50888">
    <property type="entry name" value="BHLH"/>
    <property type="match status" value="1"/>
</dbReference>
<dbReference type="PROSITE" id="PS51054">
    <property type="entry name" value="ORANGE"/>
    <property type="match status" value="1"/>
</dbReference>
<keyword id="KW-0217">Developmental protein</keyword>
<keyword id="KW-0238">DNA-binding</keyword>
<keyword id="KW-0914">Notch signaling pathway</keyword>
<keyword id="KW-0539">Nucleus</keyword>
<keyword id="KW-1267">Proteomics identification</keyword>
<keyword id="KW-1185">Reference proteome</keyword>
<keyword id="KW-0678">Repressor</keyword>
<keyword id="KW-0804">Transcription</keyword>
<keyword id="KW-0805">Transcription regulation</keyword>
<sequence>MKRPCEETTSESDMDETIDVGSENNYSGQSTSSVIRLNSPTTTSQIMARKKRRGIIEKRRRDRINNSLSELRRLVPTAFEKQGSAKLEKAEILQMTVDHLKMLQATGGKGYFDAHALAMDFMSIGFRECLTEVARYLSSVEGLDSSDPLRVRLVSHLSTCATQREAAAMTSSMAHHHHPLHPHHWAAAFHHLPAALLQPNGLHASESTPCRLSTTSEVPPAHGSALLTATFAHADSALRMPSTGSVAPCVPPLSTSLLSLSATVHAAAAAATAAAHSFPLSFAGAFPMLPPNAAAAVAAATAISPPLSVSATSSPQQTSSGTNNKPYRPWGTEVGAF</sequence>
<proteinExistence type="evidence at protein level"/>
<organism>
    <name type="scientific">Homo sapiens</name>
    <name type="common">Human</name>
    <dbReference type="NCBI Taxonomy" id="9606"/>
    <lineage>
        <taxon>Eukaryota</taxon>
        <taxon>Metazoa</taxon>
        <taxon>Chordata</taxon>
        <taxon>Craniata</taxon>
        <taxon>Vertebrata</taxon>
        <taxon>Euteleostomi</taxon>
        <taxon>Mammalia</taxon>
        <taxon>Eutheria</taxon>
        <taxon>Euarchontoglires</taxon>
        <taxon>Primates</taxon>
        <taxon>Haplorrhini</taxon>
        <taxon>Catarrhini</taxon>
        <taxon>Hominidae</taxon>
        <taxon>Homo</taxon>
    </lineage>
</organism>
<feature type="chain" id="PRO_0000245515" description="Hairy/enhancer-of-split related with YRPW motif protein 2">
    <location>
        <begin position="1"/>
        <end position="337"/>
    </location>
</feature>
<feature type="domain" description="bHLH" evidence="3">
    <location>
        <begin position="48"/>
        <end position="103"/>
    </location>
</feature>
<feature type="domain" description="Orange" evidence="2">
    <location>
        <begin position="122"/>
        <end position="157"/>
    </location>
</feature>
<feature type="region of interest" description="Disordered" evidence="4">
    <location>
        <begin position="1"/>
        <end position="52"/>
    </location>
</feature>
<feature type="region of interest" description="Transcriptional repression and interaction with NCOR1 and SIN3A" evidence="1">
    <location>
        <begin position="47"/>
        <end position="116"/>
    </location>
</feature>
<feature type="region of interest" description="Disordered" evidence="4">
    <location>
        <begin position="307"/>
        <end position="337"/>
    </location>
</feature>
<feature type="short sequence motif" description="YRPW motif">
    <location>
        <begin position="327"/>
        <end position="330"/>
    </location>
</feature>
<feature type="compositionally biased region" description="Acidic residues" evidence="4">
    <location>
        <begin position="8"/>
        <end position="18"/>
    </location>
</feature>
<feature type="compositionally biased region" description="Polar residues" evidence="4">
    <location>
        <begin position="22"/>
        <end position="46"/>
    </location>
</feature>
<feature type="compositionally biased region" description="Polar residues" evidence="4">
    <location>
        <begin position="307"/>
        <end position="325"/>
    </location>
</feature>
<feature type="sequence variant" id="VAR_026974" description="In a patient with atrioventricular septal defects; dbSNP:rs747221103." evidence="9">
    <original>T</original>
    <variation>A</variation>
    <location>
        <position position="96"/>
    </location>
</feature>
<feature type="sequence variant" id="VAR_026975" description="In a patient with atrioventricular septal defects." evidence="9">
    <original>D</original>
    <variation>A</variation>
    <location>
        <position position="98"/>
    </location>
</feature>
<feature type="sequence variant" id="VAR_026976" description="In a patient with atrioventricular septal defects." evidence="9">
    <original>L</original>
    <variation>S</variation>
    <location>
        <position position="100"/>
    </location>
</feature>
<feature type="sequence variant" id="VAR_026977" description="In dbSNP:rs3734638.">
    <original>V</original>
    <variation>M</variation>
    <location>
        <position position="140"/>
    </location>
</feature>
<feature type="mutagenesis site" description="Impairs transcriptional repression." evidence="8">
    <original>G</original>
    <variation>P</variation>
    <location>
        <position position="54"/>
    </location>
</feature>
<gene>
    <name type="primary">HEY2</name>
    <name type="synonym">BHLHB32</name>
    <name type="synonym">CHF1</name>
    <name type="synonym">GRL</name>
    <name type="synonym">HERP</name>
    <name type="synonym">HERP1</name>
    <name type="synonym">HRT2</name>
</gene>
<comment type="function">
    <text evidence="5 6 7 8">Downstream effector of Notch signaling which may be required for cardiovascular development. Transcriptional repressor which binds preferentially to the canonical E box sequence 5'-CACGTG-3'. Represses transcription by the cardiac transcriptional activators GATA4 and GATA6.</text>
</comment>
<comment type="subunit">
    <text evidence="1 5 8">May self-associate (By similarity). Interacts with GATA4, HES1 and HEYL (By similarity). Interacts with HDAC1, NCOR1 and SIN3A (By similarity). Interacts with ARNT and GATA6.</text>
</comment>
<comment type="interaction">
    <interactant intactId="EBI-750630">
        <id>Q9UBP5</id>
    </interactant>
    <interactant intactId="EBI-3867333">
        <id>A8MQ03</id>
        <label>CYSRT1</label>
    </interactant>
    <organismsDiffer>false</organismsDiffer>
    <experiments>3</experiments>
</comment>
<comment type="interaction">
    <interactant intactId="EBI-750630">
        <id>Q9UBP5</id>
    </interactant>
    <interactant intactId="EBI-750641">
        <id>Q5TD97</id>
        <label>FHL5</label>
    </interactant>
    <organismsDiffer>false</organismsDiffer>
    <experiments>3</experiments>
</comment>
<comment type="interaction">
    <interactant intactId="EBI-750630">
        <id>Q9UBP5</id>
    </interactant>
    <interactant intactId="EBI-7231130">
        <id>Q9Y5J3</id>
        <label>HEY1</label>
    </interactant>
    <organismsDiffer>false</organismsDiffer>
    <experiments>2</experiments>
</comment>
<comment type="interaction">
    <interactant intactId="EBI-750630">
        <id>Q9UBP5</id>
    </interactant>
    <interactant intactId="EBI-740785">
        <id>P49639</id>
        <label>HOXA1</label>
    </interactant>
    <organismsDiffer>false</organismsDiffer>
    <experiments>3</experiments>
</comment>
<comment type="interaction">
    <interactant intactId="EBI-750630">
        <id>Q9UBP5</id>
    </interactant>
    <interactant intactId="EBI-7116203">
        <id>O75031</id>
        <label>HSF2BP</label>
    </interactant>
    <organismsDiffer>false</organismsDiffer>
    <experiments>3</experiments>
</comment>
<comment type="interaction">
    <interactant intactId="EBI-750630">
        <id>Q9UBP5</id>
    </interactant>
    <interactant intactId="EBI-466029">
        <id>P42858</id>
        <label>HTT</label>
    </interactant>
    <organismsDiffer>false</organismsDiffer>
    <experiments>2</experiments>
</comment>
<comment type="interaction">
    <interactant intactId="EBI-750630">
        <id>Q9UBP5</id>
    </interactant>
    <interactant intactId="EBI-11959885">
        <id>Q07627</id>
        <label>KRTAP1-1</label>
    </interactant>
    <organismsDiffer>false</organismsDiffer>
    <experiments>3</experiments>
</comment>
<comment type="interaction">
    <interactant intactId="EBI-750630">
        <id>Q9UBP5</id>
    </interactant>
    <interactant intactId="EBI-1052037">
        <id>Q8IUC1</id>
        <label>KRTAP11-1</label>
    </interactant>
    <organismsDiffer>false</organismsDiffer>
    <experiments>3</experiments>
</comment>
<comment type="interaction">
    <interactant intactId="EBI-750630">
        <id>Q9UBP5</id>
    </interactant>
    <interactant intactId="EBI-9996449">
        <id>Q9BYR8</id>
        <label>KRTAP3-1</label>
    </interactant>
    <organismsDiffer>false</organismsDiffer>
    <experiments>3</experiments>
</comment>
<comment type="interaction">
    <interactant intactId="EBI-750630">
        <id>Q9UBP5</id>
    </interactant>
    <interactant intactId="EBI-11958132">
        <id>Q9BYR3</id>
        <label>KRTAP4-4</label>
    </interactant>
    <organismsDiffer>false</organismsDiffer>
    <experiments>3</experiments>
</comment>
<comment type="interaction">
    <interactant intactId="EBI-750630">
        <id>Q9UBP5</id>
    </interactant>
    <interactant intactId="EBI-3958099">
        <id>P26371</id>
        <label>KRTAP5-9</label>
    </interactant>
    <organismsDiffer>false</organismsDiffer>
    <experiments>3</experiments>
</comment>
<comment type="interaction">
    <interactant intactId="EBI-750630">
        <id>Q9UBP5</id>
    </interactant>
    <interactant intactId="EBI-12111050">
        <id>Q3LI64</id>
        <label>KRTAP6-1</label>
    </interactant>
    <organismsDiffer>false</organismsDiffer>
    <experiments>3</experiments>
</comment>
<comment type="interaction">
    <interactant intactId="EBI-750630">
        <id>Q9UBP5</id>
    </interactant>
    <interactant intactId="EBI-11962084">
        <id>Q3LI66</id>
        <label>KRTAP6-2</label>
    </interactant>
    <organismsDiffer>false</organismsDiffer>
    <experiments>3</experiments>
</comment>
<comment type="interaction">
    <interactant intactId="EBI-750630">
        <id>Q9UBP5</id>
    </interactant>
    <interactant intactId="EBI-10261141">
        <id>Q8IUC2</id>
        <label>KRTAP8-1</label>
    </interactant>
    <organismsDiffer>false</organismsDiffer>
    <experiments>3</experiments>
</comment>
<comment type="interaction">
    <interactant intactId="EBI-750630">
        <id>Q9UBP5</id>
    </interactant>
    <interactant intactId="EBI-350517">
        <id>Q9NR12</id>
        <label>PDLIM7</label>
    </interactant>
    <organismsDiffer>false</organismsDiffer>
    <experiments>3</experiments>
</comment>
<comment type="interaction">
    <interactant intactId="EBI-750630">
        <id>Q9UBP5</id>
    </interactant>
    <interactant intactId="EBI-740322">
        <id>Q93062</id>
        <label>RBPMS</label>
    </interactant>
    <organismsDiffer>false</organismsDiffer>
    <experiments>3</experiments>
</comment>
<comment type="interaction">
    <interactant intactId="EBI-750630">
        <id>Q9UBP5</id>
    </interactant>
    <interactant intactId="EBI-1802965">
        <id>Q96EB6</id>
        <label>SIRT1</label>
    </interactant>
    <organismsDiffer>false</organismsDiffer>
    <experiments>3</experiments>
</comment>
<comment type="interaction">
    <interactant intactId="EBI-750630">
        <id>Q9UBP5</id>
    </interactant>
    <interactant intactId="EBI-359224">
        <id>Q13077</id>
        <label>TRAF1</label>
    </interactant>
    <organismsDiffer>false</organismsDiffer>
    <experiments>6</experiments>
</comment>
<comment type="interaction">
    <interactant intactId="EBI-750630">
        <id>Q9UBP5</id>
    </interactant>
    <interactant intactId="EBI-3650647">
        <id>Q9BUZ4</id>
        <label>TRAF4</label>
    </interactant>
    <organismsDiffer>false</organismsDiffer>
    <experiments>3</experiments>
</comment>
<comment type="subcellular location">
    <subcellularLocation>
        <location evidence="2 3">Nucleus</location>
    </subcellularLocation>
</comment>
<comment type="similarity">
    <text evidence="10">Belongs to the HEY family.</text>
</comment>
<accession>Q9UBP5</accession>
<reference key="1">
    <citation type="journal article" date="1999" name="Mech. Dev.">
        <title>Hey genes: a novel subfamily of hairy- and enhancer of split related genes specifically expressed during mouse embryogenesis.</title>
        <authorList>
            <person name="Leimeister C."/>
            <person name="Externbrinck A."/>
            <person name="Klamt B."/>
            <person name="Gessler M."/>
        </authorList>
    </citation>
    <scope>NUCLEOTIDE SEQUENCE [MRNA]</scope>
</reference>
<reference key="2">
    <citation type="journal article" date="2000" name="Science">
        <title>Gridlock, an HLH gene required for assembly of the aorta in zebrafish.</title>
        <authorList>
            <person name="Zhong T.P."/>
            <person name="Rosenberg M."/>
            <person name="Mohideen M.-A.P.K."/>
            <person name="Weinstein B."/>
            <person name="Fishman M.C."/>
        </authorList>
    </citation>
    <scope>NUCLEOTIDE SEQUENCE [MRNA]</scope>
    <source>
        <tissue>Heart</tissue>
    </source>
</reference>
<reference key="3">
    <citation type="journal article" date="2000" name="J. Biol. Chem.">
        <title>Cardiovascular basic helix loop helix factor 1, a novel transcriptional repressor expressed preferentially in the developing and adult cardiovascular system.</title>
        <authorList>
            <person name="Chin M.T."/>
            <person name="Maemura K."/>
            <person name="Fukumoto S."/>
            <person name="Jain M.K."/>
            <person name="Layne M.D."/>
            <person name="Watanabe M."/>
            <person name="Hsieh C.-M."/>
            <person name="Lee M.-E."/>
        </authorList>
    </citation>
    <scope>NUCLEOTIDE SEQUENCE [MRNA]</scope>
    <scope>FUNCTION</scope>
    <scope>INTERACTION WITH ARNT</scope>
    <source>
        <tissue>Heart</tissue>
    </source>
</reference>
<reference key="4">
    <citation type="journal article" date="2000" name="Proc. Natl. Acad. Sci. U.S.A.">
        <title>Members of the HRT family of basic helix-loop-helix proteins act as transcriptional repressors downstream of Notch signaling.</title>
        <authorList>
            <person name="Nakagawa O."/>
            <person name="McFadden D.G."/>
            <person name="Nakagawa M."/>
            <person name="Yanagisawa H."/>
            <person name="Hu T."/>
            <person name="Srivastava D."/>
            <person name="Olson E.N."/>
        </authorList>
    </citation>
    <scope>NUCLEOTIDE SEQUENCE [MRNA]</scope>
    <scope>FUNCTION</scope>
    <scope>DNA-BINDING</scope>
</reference>
<reference key="5">
    <citation type="journal article" date="2001" name="Mol. Cell. Biol.">
        <title>HERP, a new primary target of Notch regulated by ligand binding.</title>
        <authorList>
            <person name="Iso T."/>
            <person name="Sartorelli V."/>
            <person name="Chung G."/>
            <person name="Shichinohe T."/>
            <person name="Kedes L."/>
            <person name="Hamamori Y."/>
        </authorList>
    </citation>
    <scope>NUCLEOTIDE SEQUENCE [MRNA]</scope>
    <source>
        <tissue>Heart</tissue>
    </source>
</reference>
<reference key="6">
    <citation type="submission" date="2000-06" db="EMBL/GenBank/DDBJ databases">
        <title>Homo sapiens testis cDNA clone, basic-helix-loop-helix protein (Hey2).</title>
        <authorList>
            <person name="Tanaka K."/>
            <person name="Miyata J."/>
            <person name="Ikeda J."/>
        </authorList>
    </citation>
    <scope>NUCLEOTIDE SEQUENCE [MRNA]</scope>
    <source>
        <tissue>Testis</tissue>
    </source>
</reference>
<reference key="7">
    <citation type="submission" date="2004-10" db="EMBL/GenBank/DDBJ databases">
        <title>Cloning of human full-length CDSs in BD Creator(TM) system donor vector.</title>
        <authorList>
            <person name="Kalnine N."/>
            <person name="Chen X."/>
            <person name="Rolfs A."/>
            <person name="Halleck A."/>
            <person name="Hines L."/>
            <person name="Eisenstein S."/>
            <person name="Koundinya M."/>
            <person name="Raphael J."/>
            <person name="Moreira D."/>
            <person name="Kelley T."/>
            <person name="LaBaer J."/>
            <person name="Lin Y."/>
            <person name="Phelan M."/>
            <person name="Farmer A."/>
        </authorList>
    </citation>
    <scope>NUCLEOTIDE SEQUENCE [LARGE SCALE MRNA]</scope>
</reference>
<reference key="8">
    <citation type="journal article" date="2003" name="Nature">
        <title>The DNA sequence and analysis of human chromosome 6.</title>
        <authorList>
            <person name="Mungall A.J."/>
            <person name="Palmer S.A."/>
            <person name="Sims S.K."/>
            <person name="Edwards C.A."/>
            <person name="Ashurst J.L."/>
            <person name="Wilming L."/>
            <person name="Jones M.C."/>
            <person name="Horton R."/>
            <person name="Hunt S.E."/>
            <person name="Scott C.E."/>
            <person name="Gilbert J.G.R."/>
            <person name="Clamp M.E."/>
            <person name="Bethel G."/>
            <person name="Milne S."/>
            <person name="Ainscough R."/>
            <person name="Almeida J.P."/>
            <person name="Ambrose K.D."/>
            <person name="Andrews T.D."/>
            <person name="Ashwell R.I.S."/>
            <person name="Babbage A.K."/>
            <person name="Bagguley C.L."/>
            <person name="Bailey J."/>
            <person name="Banerjee R."/>
            <person name="Barker D.J."/>
            <person name="Barlow K.F."/>
            <person name="Bates K."/>
            <person name="Beare D.M."/>
            <person name="Beasley H."/>
            <person name="Beasley O."/>
            <person name="Bird C.P."/>
            <person name="Blakey S.E."/>
            <person name="Bray-Allen S."/>
            <person name="Brook J."/>
            <person name="Brown A.J."/>
            <person name="Brown J.Y."/>
            <person name="Burford D.C."/>
            <person name="Burrill W."/>
            <person name="Burton J."/>
            <person name="Carder C."/>
            <person name="Carter N.P."/>
            <person name="Chapman J.C."/>
            <person name="Clark S.Y."/>
            <person name="Clark G."/>
            <person name="Clee C.M."/>
            <person name="Clegg S."/>
            <person name="Cobley V."/>
            <person name="Collier R.E."/>
            <person name="Collins J.E."/>
            <person name="Colman L.K."/>
            <person name="Corby N.R."/>
            <person name="Coville G.J."/>
            <person name="Culley K.M."/>
            <person name="Dhami P."/>
            <person name="Davies J."/>
            <person name="Dunn M."/>
            <person name="Earthrowl M.E."/>
            <person name="Ellington A.E."/>
            <person name="Evans K.A."/>
            <person name="Faulkner L."/>
            <person name="Francis M.D."/>
            <person name="Frankish A."/>
            <person name="Frankland J."/>
            <person name="French L."/>
            <person name="Garner P."/>
            <person name="Garnett J."/>
            <person name="Ghori M.J."/>
            <person name="Gilby L.M."/>
            <person name="Gillson C.J."/>
            <person name="Glithero R.J."/>
            <person name="Grafham D.V."/>
            <person name="Grant M."/>
            <person name="Gribble S."/>
            <person name="Griffiths C."/>
            <person name="Griffiths M.N.D."/>
            <person name="Hall R."/>
            <person name="Halls K.S."/>
            <person name="Hammond S."/>
            <person name="Harley J.L."/>
            <person name="Hart E.A."/>
            <person name="Heath P.D."/>
            <person name="Heathcott R."/>
            <person name="Holmes S.J."/>
            <person name="Howden P.J."/>
            <person name="Howe K.L."/>
            <person name="Howell G.R."/>
            <person name="Huckle E."/>
            <person name="Humphray S.J."/>
            <person name="Humphries M.D."/>
            <person name="Hunt A.R."/>
            <person name="Johnson C.M."/>
            <person name="Joy A.A."/>
            <person name="Kay M."/>
            <person name="Keenan S.J."/>
            <person name="Kimberley A.M."/>
            <person name="King A."/>
            <person name="Laird G.K."/>
            <person name="Langford C."/>
            <person name="Lawlor S."/>
            <person name="Leongamornlert D.A."/>
            <person name="Leversha M."/>
            <person name="Lloyd C.R."/>
            <person name="Lloyd D.M."/>
            <person name="Loveland J.E."/>
            <person name="Lovell J."/>
            <person name="Martin S."/>
            <person name="Mashreghi-Mohammadi M."/>
            <person name="Maslen G.L."/>
            <person name="Matthews L."/>
            <person name="McCann O.T."/>
            <person name="McLaren S.J."/>
            <person name="McLay K."/>
            <person name="McMurray A."/>
            <person name="Moore M.J.F."/>
            <person name="Mullikin J.C."/>
            <person name="Niblett D."/>
            <person name="Nickerson T."/>
            <person name="Novik K.L."/>
            <person name="Oliver K."/>
            <person name="Overton-Larty E.K."/>
            <person name="Parker A."/>
            <person name="Patel R."/>
            <person name="Pearce A.V."/>
            <person name="Peck A.I."/>
            <person name="Phillimore B.J.C.T."/>
            <person name="Phillips S."/>
            <person name="Plumb R.W."/>
            <person name="Porter K.M."/>
            <person name="Ramsey Y."/>
            <person name="Ranby S.A."/>
            <person name="Rice C.M."/>
            <person name="Ross M.T."/>
            <person name="Searle S.M."/>
            <person name="Sehra H.K."/>
            <person name="Sheridan E."/>
            <person name="Skuce C.D."/>
            <person name="Smith S."/>
            <person name="Smith M."/>
            <person name="Spraggon L."/>
            <person name="Squares S.L."/>
            <person name="Steward C.A."/>
            <person name="Sycamore N."/>
            <person name="Tamlyn-Hall G."/>
            <person name="Tester J."/>
            <person name="Theaker A.J."/>
            <person name="Thomas D.W."/>
            <person name="Thorpe A."/>
            <person name="Tracey A."/>
            <person name="Tromans A."/>
            <person name="Tubby B."/>
            <person name="Wall M."/>
            <person name="Wallis J.M."/>
            <person name="West A.P."/>
            <person name="White S.S."/>
            <person name="Whitehead S.L."/>
            <person name="Whittaker H."/>
            <person name="Wild A."/>
            <person name="Willey D.J."/>
            <person name="Wilmer T.E."/>
            <person name="Wood J.M."/>
            <person name="Wray P.W."/>
            <person name="Wyatt J.C."/>
            <person name="Young L."/>
            <person name="Younger R.M."/>
            <person name="Bentley D.R."/>
            <person name="Coulson A."/>
            <person name="Durbin R.M."/>
            <person name="Hubbard T."/>
            <person name="Sulston J.E."/>
            <person name="Dunham I."/>
            <person name="Rogers J."/>
            <person name="Beck S."/>
        </authorList>
    </citation>
    <scope>NUCLEOTIDE SEQUENCE [LARGE SCALE GENOMIC DNA]</scope>
</reference>
<reference key="9">
    <citation type="journal article" date="2004" name="Genome Res.">
        <title>The status, quality, and expansion of the NIH full-length cDNA project: the Mammalian Gene Collection (MGC).</title>
        <authorList>
            <consortium name="The MGC Project Team"/>
        </authorList>
    </citation>
    <scope>NUCLEOTIDE SEQUENCE [LARGE SCALE MRNA]</scope>
    <source>
        <tissue>Lung</tissue>
    </source>
</reference>
<reference key="10">
    <citation type="journal article" date="2004" name="J. Biol. Chem.">
        <title>Hairy-related transcription factors inhibit GATA-dependent cardiac gene expression through a signal-responsive mechanism.</title>
        <authorList>
            <person name="Kathiriya I.S."/>
            <person name="King I.N."/>
            <person name="Murakami M."/>
            <person name="Nakagawa M."/>
            <person name="Astle J.M."/>
            <person name="Gardner K.A."/>
            <person name="Gerard R.D."/>
            <person name="Olson E.N."/>
            <person name="Srivastava D."/>
            <person name="Nakagawa O."/>
        </authorList>
    </citation>
    <scope>FUNCTION</scope>
</reference>
<reference key="11">
    <citation type="journal article" date="2006" name="Biochem. Biophys. Res. Commun.">
        <title>CHF1/Hey2 suppresses SM-MHC promoter activity through an interaction with GATA-6.</title>
        <authorList>
            <person name="Shirvani S."/>
            <person name="Xiang F."/>
            <person name="Koibuchi N."/>
            <person name="Chin M.T."/>
        </authorList>
    </citation>
    <scope>FUNCTION</scope>
    <scope>INTERACTION WITH GATA6</scope>
    <scope>MUTAGENESIS OF GLY-54</scope>
</reference>
<reference key="12">
    <citation type="journal article" date="2006" name="Hum. Mutat.">
        <title>HEY2 mutations in malformed hearts.</title>
        <authorList>
            <person name="Reamon-Buettner S.M."/>
            <person name="Borlak J."/>
        </authorList>
    </citation>
    <scope>VARIANTS ALA-96; ALA-98 AND SER-100</scope>
</reference>
<evidence type="ECO:0000250" key="1"/>
<evidence type="ECO:0000255" key="2">
    <source>
        <dbReference type="PROSITE-ProRule" id="PRU00380"/>
    </source>
</evidence>
<evidence type="ECO:0000255" key="3">
    <source>
        <dbReference type="PROSITE-ProRule" id="PRU00981"/>
    </source>
</evidence>
<evidence type="ECO:0000256" key="4">
    <source>
        <dbReference type="SAM" id="MobiDB-lite"/>
    </source>
</evidence>
<evidence type="ECO:0000269" key="5">
    <source>
    </source>
</evidence>
<evidence type="ECO:0000269" key="6">
    <source>
    </source>
</evidence>
<evidence type="ECO:0000269" key="7">
    <source>
    </source>
</evidence>
<evidence type="ECO:0000269" key="8">
    <source>
    </source>
</evidence>
<evidence type="ECO:0000269" key="9">
    <source>
    </source>
</evidence>
<evidence type="ECO:0000305" key="10"/>